<keyword id="KW-0050">Antiport</keyword>
<keyword id="KW-0150">Chloroplast</keyword>
<keyword id="KW-0375">Hydrogen ion transport</keyword>
<keyword id="KW-0406">Ion transport</keyword>
<keyword id="KW-0472">Membrane</keyword>
<keyword id="KW-0934">Plastid</keyword>
<keyword id="KW-1001">Plastid inner membrane</keyword>
<keyword id="KW-0630">Potassium</keyword>
<keyword id="KW-0633">Potassium transport</keyword>
<keyword id="KW-0812">Transmembrane</keyword>
<keyword id="KW-1133">Transmembrane helix</keyword>
<keyword id="KW-0813">Transport</keyword>
<dbReference type="EMBL" id="AJ271079">
    <property type="protein sequence ID" value="CAP58404.1"/>
    <property type="molecule type" value="Genomic_DNA"/>
</dbReference>
<dbReference type="RefSeq" id="NP_084704.2">
    <property type="nucleotide sequence ID" value="NC_002693.2"/>
</dbReference>
<dbReference type="SMR" id="Q9MTK9"/>
<dbReference type="GeneID" id="802791"/>
<dbReference type="GO" id="GO:0009706">
    <property type="term" value="C:chloroplast inner membrane"/>
    <property type="evidence" value="ECO:0007669"/>
    <property type="project" value="UniProtKB-SubCell"/>
</dbReference>
<dbReference type="GO" id="GO:0015297">
    <property type="term" value="F:antiporter activity"/>
    <property type="evidence" value="ECO:0007669"/>
    <property type="project" value="UniProtKB-KW"/>
</dbReference>
<dbReference type="GO" id="GO:0015078">
    <property type="term" value="F:proton transmembrane transporter activity"/>
    <property type="evidence" value="ECO:0007669"/>
    <property type="project" value="UniProtKB-UniRule"/>
</dbReference>
<dbReference type="GO" id="GO:0006813">
    <property type="term" value="P:potassium ion transport"/>
    <property type="evidence" value="ECO:0007669"/>
    <property type="project" value="UniProtKB-UniRule"/>
</dbReference>
<dbReference type="HAMAP" id="MF_01308">
    <property type="entry name" value="CemA_PxcA"/>
    <property type="match status" value="1"/>
</dbReference>
<dbReference type="InterPro" id="IPR004282">
    <property type="entry name" value="CemA"/>
</dbReference>
<dbReference type="PANTHER" id="PTHR33650:SF2">
    <property type="entry name" value="CHLOROPLAST ENVELOPE MEMBRANE PROTEIN"/>
    <property type="match status" value="1"/>
</dbReference>
<dbReference type="PANTHER" id="PTHR33650">
    <property type="entry name" value="CHLOROPLAST ENVELOPE MEMBRANE PROTEIN-RELATED"/>
    <property type="match status" value="1"/>
</dbReference>
<dbReference type="Pfam" id="PF03040">
    <property type="entry name" value="CemA"/>
    <property type="match status" value="1"/>
</dbReference>
<gene>
    <name evidence="1" type="primary">cemA</name>
    <name type="synonym">ycf10</name>
</gene>
<name>CEMA_OENEH</name>
<accession>Q9MTK9</accession>
<accession>A9IKP8</accession>
<protein>
    <recommendedName>
        <fullName evidence="1">Potassium/proton antiporter CemA</fullName>
    </recommendedName>
    <alternativeName>
        <fullName evidence="1">Chloroplast envelope membrane protein A</fullName>
        <shortName evidence="1">CemA</shortName>
    </alternativeName>
</protein>
<comment type="function">
    <text evidence="1">Contributes to K(+)/H(+) antiport activity by supporting proton efflux to control proton extrusion and homeostasis in chloroplasts in a light-dependent manner to modulate photosynthesis. Prevents excessive induction of non-photochemical quenching (NPQ) under continuous-light conditions. Indirectly promotes efficient inorganic carbon uptake into chloroplasts.</text>
</comment>
<comment type="catalytic activity">
    <reaction evidence="1">
        <text>K(+)(in) + H(+)(out) = K(+)(out) + H(+)(in)</text>
        <dbReference type="Rhea" id="RHEA:29467"/>
        <dbReference type="ChEBI" id="CHEBI:15378"/>
        <dbReference type="ChEBI" id="CHEBI:29103"/>
    </reaction>
</comment>
<comment type="subcellular location">
    <subcellularLocation>
        <location evidence="1">Plastid</location>
        <location evidence="1">Chloroplast inner membrane</location>
        <topology evidence="1">Multi-pass membrane protein</topology>
    </subcellularLocation>
</comment>
<comment type="similarity">
    <text evidence="1 2">Belongs to the CemA family.</text>
</comment>
<sequence>MVFFPWWISLLFNKGLESWVTNWWNTTHSETFLTDMQEKSILDKFIELEELLLLDEMINEYPETHLQTLRIGIHKEMVRLIKMRNEDHIHTILHLSTNIICFIIFRGYSILGNKELLILNSWMQEFLYNLSDTIKAFSILLLTDFCIGFHSPHGWELMIAYVYKDFGFAQNDQIISGLVSTFPVILDTIFKYWIFRYLNRVSPSLVVIYDSMND</sequence>
<geneLocation type="chloroplast"/>
<organism>
    <name type="scientific">Oenothera elata subsp. hookeri</name>
    <name type="common">Hooker's evening primrose</name>
    <name type="synonym">Oenothera hookeri</name>
    <dbReference type="NCBI Taxonomy" id="85636"/>
    <lineage>
        <taxon>Eukaryota</taxon>
        <taxon>Viridiplantae</taxon>
        <taxon>Streptophyta</taxon>
        <taxon>Embryophyta</taxon>
        <taxon>Tracheophyta</taxon>
        <taxon>Spermatophyta</taxon>
        <taxon>Magnoliopsida</taxon>
        <taxon>eudicotyledons</taxon>
        <taxon>Gunneridae</taxon>
        <taxon>Pentapetalae</taxon>
        <taxon>rosids</taxon>
        <taxon>malvids</taxon>
        <taxon>Myrtales</taxon>
        <taxon>Onagraceae</taxon>
        <taxon>Onagroideae</taxon>
        <taxon>Onagreae</taxon>
        <taxon>Oenothera</taxon>
    </lineage>
</organism>
<reference key="1">
    <citation type="journal article" date="2000" name="Mol. Gen. Genet.">
        <title>Complete nucleotide sequence of the Oenothera elata plastid chromosome, representing plastome I of the five distinguishable Euoenothera plastomes.</title>
        <authorList>
            <person name="Hupfer H."/>
            <person name="Swiatek M."/>
            <person name="Hornung S."/>
            <person name="Herrmann R.G."/>
            <person name="Maier R.M."/>
            <person name="Chiu W.-L."/>
            <person name="Sears B."/>
        </authorList>
    </citation>
    <scope>NUCLEOTIDE SEQUENCE [LARGE SCALE GENOMIC DNA]</scope>
    <scope>IDENTIFICATION BY IMMUNOBLOTTING</scope>
    <source>
        <strain>cv. Johansen</strain>
    </source>
</reference>
<reference key="2">
    <citation type="journal article" date="2008" name="Nucleic Acids Res.">
        <title>The complete nucleotide sequences of the five genetically distinct plastid genomes of Oenothera, subsection Oenothera: I. Sequence evaluation and plastome evolution.</title>
        <authorList>
            <person name="Greiner S."/>
            <person name="Wang X."/>
            <person name="Rauwolf U."/>
            <person name="Silber M.V."/>
            <person name="Mayer K."/>
            <person name="Meurer J."/>
            <person name="Haberer G."/>
            <person name="Herrmann R.G."/>
        </authorList>
    </citation>
    <scope>NUCLEOTIDE SEQUENCE [LARGE SCALE GENOMIC DNA]</scope>
    <source>
        <strain>cv. Johansen</strain>
    </source>
</reference>
<evidence type="ECO:0000255" key="1">
    <source>
        <dbReference type="HAMAP-Rule" id="MF_01308"/>
    </source>
</evidence>
<evidence type="ECO:0000305" key="2"/>
<proteinExistence type="evidence at protein level"/>
<feature type="chain" id="PRO_0000216651" description="Potassium/proton antiporter CemA">
    <location>
        <begin position="1"/>
        <end position="214"/>
    </location>
</feature>
<feature type="transmembrane region" description="Helical" evidence="1">
    <location>
        <begin position="92"/>
        <end position="112"/>
    </location>
</feature>
<feature type="transmembrane region" description="Helical" evidence="1">
    <location>
        <begin position="174"/>
        <end position="194"/>
    </location>
</feature>